<feature type="chain" id="PRO_0000229847" description="Phosphoribosyl-AMP cyclohydrolase">
    <location>
        <begin position="1"/>
        <end position="120"/>
    </location>
</feature>
<feature type="binding site" evidence="1">
    <location>
        <position position="74"/>
    </location>
    <ligand>
        <name>Mg(2+)</name>
        <dbReference type="ChEBI" id="CHEBI:18420"/>
    </ligand>
</feature>
<feature type="binding site" evidence="1">
    <location>
        <position position="75"/>
    </location>
    <ligand>
        <name>Zn(2+)</name>
        <dbReference type="ChEBI" id="CHEBI:29105"/>
        <note>ligand shared between dimeric partners</note>
    </ligand>
</feature>
<feature type="binding site" evidence="1">
    <location>
        <position position="76"/>
    </location>
    <ligand>
        <name>Mg(2+)</name>
        <dbReference type="ChEBI" id="CHEBI:18420"/>
    </ligand>
</feature>
<feature type="binding site" evidence="1">
    <location>
        <position position="78"/>
    </location>
    <ligand>
        <name>Mg(2+)</name>
        <dbReference type="ChEBI" id="CHEBI:18420"/>
    </ligand>
</feature>
<feature type="binding site" evidence="1">
    <location>
        <position position="91"/>
    </location>
    <ligand>
        <name>Zn(2+)</name>
        <dbReference type="ChEBI" id="CHEBI:29105"/>
        <note>ligand shared between dimeric partners</note>
    </ligand>
</feature>
<feature type="binding site" evidence="1">
    <location>
        <position position="98"/>
    </location>
    <ligand>
        <name>Zn(2+)</name>
        <dbReference type="ChEBI" id="CHEBI:29105"/>
        <note>ligand shared between dimeric partners</note>
    </ligand>
</feature>
<protein>
    <recommendedName>
        <fullName evidence="1">Phosphoribosyl-AMP cyclohydrolase</fullName>
        <shortName evidence="1">PRA-CH</shortName>
        <ecNumber evidence="1">3.5.4.19</ecNumber>
    </recommendedName>
</protein>
<sequence>MSVDLAFDEQELLPAVAQDAESGDVLMLAYVSEEAVARSRETGYAHYYSRSREELWKKGGSSGHTQEIEEIRVDCDGDAILYLVEQAGGACHTGYDTCFHRTLDGDIVGEQVFDPEEIYE</sequence>
<name>HIS3_NATPD</name>
<reference key="1">
    <citation type="journal article" date="2005" name="Genome Res.">
        <title>Living with two extremes: conclusions from the genome sequence of Natronomonas pharaonis.</title>
        <authorList>
            <person name="Falb M."/>
            <person name="Pfeiffer F."/>
            <person name="Palm P."/>
            <person name="Rodewald K."/>
            <person name="Hickmann V."/>
            <person name="Tittor J."/>
            <person name="Oesterhelt D."/>
        </authorList>
    </citation>
    <scope>NUCLEOTIDE SEQUENCE [LARGE SCALE GENOMIC DNA]</scope>
    <source>
        <strain>ATCC 35678 / DSM 2160 / CIP 103997 / JCM 8858 / NBRC 14720 / NCIMB 2260 / Gabara</strain>
    </source>
</reference>
<keyword id="KW-0028">Amino-acid biosynthesis</keyword>
<keyword id="KW-0963">Cytoplasm</keyword>
<keyword id="KW-0368">Histidine biosynthesis</keyword>
<keyword id="KW-0378">Hydrolase</keyword>
<keyword id="KW-0460">Magnesium</keyword>
<keyword id="KW-0479">Metal-binding</keyword>
<keyword id="KW-1185">Reference proteome</keyword>
<keyword id="KW-0862">Zinc</keyword>
<evidence type="ECO:0000255" key="1">
    <source>
        <dbReference type="HAMAP-Rule" id="MF_01021"/>
    </source>
</evidence>
<comment type="function">
    <text evidence="1">Catalyzes the hydrolysis of the adenine ring of phosphoribosyl-AMP.</text>
</comment>
<comment type="catalytic activity">
    <reaction evidence="1">
        <text>1-(5-phospho-beta-D-ribosyl)-5'-AMP + H2O = 1-(5-phospho-beta-D-ribosyl)-5-[(5-phospho-beta-D-ribosylamino)methylideneamino]imidazole-4-carboxamide</text>
        <dbReference type="Rhea" id="RHEA:20049"/>
        <dbReference type="ChEBI" id="CHEBI:15377"/>
        <dbReference type="ChEBI" id="CHEBI:58435"/>
        <dbReference type="ChEBI" id="CHEBI:59457"/>
        <dbReference type="EC" id="3.5.4.19"/>
    </reaction>
</comment>
<comment type="cofactor">
    <cofactor evidence="1">
        <name>Mg(2+)</name>
        <dbReference type="ChEBI" id="CHEBI:18420"/>
    </cofactor>
    <text evidence="1">Binds 1 Mg(2+) ion per subunit.</text>
</comment>
<comment type="cofactor">
    <cofactor evidence="1">
        <name>Zn(2+)</name>
        <dbReference type="ChEBI" id="CHEBI:29105"/>
    </cofactor>
    <text evidence="1">Binds 1 zinc ion per subunit.</text>
</comment>
<comment type="pathway">
    <text evidence="1">Amino-acid biosynthesis; L-histidine biosynthesis; L-histidine from 5-phospho-alpha-D-ribose 1-diphosphate: step 3/9.</text>
</comment>
<comment type="subunit">
    <text evidence="1">Homodimer.</text>
</comment>
<comment type="subcellular location">
    <subcellularLocation>
        <location evidence="1">Cytoplasm</location>
    </subcellularLocation>
</comment>
<comment type="similarity">
    <text evidence="1">Belongs to the PRA-CH family.</text>
</comment>
<organism>
    <name type="scientific">Natronomonas pharaonis (strain ATCC 35678 / DSM 2160 / CIP 103997 / JCM 8858 / NBRC 14720 / NCIMB 2260 / Gabara)</name>
    <name type="common">Halobacterium pharaonis</name>
    <dbReference type="NCBI Taxonomy" id="348780"/>
    <lineage>
        <taxon>Archaea</taxon>
        <taxon>Methanobacteriati</taxon>
        <taxon>Methanobacteriota</taxon>
        <taxon>Stenosarchaea group</taxon>
        <taxon>Halobacteria</taxon>
        <taxon>Halobacteriales</taxon>
        <taxon>Haloarculaceae</taxon>
        <taxon>Natronomonas</taxon>
    </lineage>
</organism>
<accession>Q3IMJ0</accession>
<proteinExistence type="inferred from homology"/>
<gene>
    <name evidence="1" type="primary">hisI</name>
    <name type="ordered locus">NP_5154A</name>
</gene>
<dbReference type="EC" id="3.5.4.19" evidence="1"/>
<dbReference type="EMBL" id="CR936257">
    <property type="protein sequence ID" value="CAI50668.1"/>
    <property type="molecule type" value="Genomic_DNA"/>
</dbReference>
<dbReference type="RefSeq" id="WP_011324278.1">
    <property type="nucleotide sequence ID" value="NC_007426.1"/>
</dbReference>
<dbReference type="SMR" id="Q3IMJ0"/>
<dbReference type="STRING" id="348780.NP_5154A"/>
<dbReference type="EnsemblBacteria" id="CAI50668">
    <property type="protein sequence ID" value="CAI50668"/>
    <property type="gene ID" value="NP_5154A"/>
</dbReference>
<dbReference type="GeneID" id="3702822"/>
<dbReference type="KEGG" id="nph:NP_5154A"/>
<dbReference type="eggNOG" id="arCOG02676">
    <property type="taxonomic scope" value="Archaea"/>
</dbReference>
<dbReference type="HOGENOM" id="CLU_048577_5_0_2"/>
<dbReference type="OrthoDB" id="5853at2157"/>
<dbReference type="UniPathway" id="UPA00031">
    <property type="reaction ID" value="UER00008"/>
</dbReference>
<dbReference type="Proteomes" id="UP000002698">
    <property type="component" value="Chromosome"/>
</dbReference>
<dbReference type="GO" id="GO:0005737">
    <property type="term" value="C:cytoplasm"/>
    <property type="evidence" value="ECO:0007669"/>
    <property type="project" value="UniProtKB-SubCell"/>
</dbReference>
<dbReference type="GO" id="GO:0000287">
    <property type="term" value="F:magnesium ion binding"/>
    <property type="evidence" value="ECO:0007669"/>
    <property type="project" value="UniProtKB-UniRule"/>
</dbReference>
<dbReference type="GO" id="GO:0004635">
    <property type="term" value="F:phosphoribosyl-AMP cyclohydrolase activity"/>
    <property type="evidence" value="ECO:0007669"/>
    <property type="project" value="UniProtKB-UniRule"/>
</dbReference>
<dbReference type="GO" id="GO:0008270">
    <property type="term" value="F:zinc ion binding"/>
    <property type="evidence" value="ECO:0007669"/>
    <property type="project" value="UniProtKB-UniRule"/>
</dbReference>
<dbReference type="GO" id="GO:0000105">
    <property type="term" value="P:L-histidine biosynthetic process"/>
    <property type="evidence" value="ECO:0007669"/>
    <property type="project" value="UniProtKB-UniRule"/>
</dbReference>
<dbReference type="FunFam" id="3.10.20.810:FF:000001">
    <property type="entry name" value="Histidine biosynthesis bifunctional protein HisIE"/>
    <property type="match status" value="1"/>
</dbReference>
<dbReference type="Gene3D" id="3.10.20.810">
    <property type="entry name" value="Phosphoribosyl-AMP cyclohydrolase"/>
    <property type="match status" value="1"/>
</dbReference>
<dbReference type="HAMAP" id="MF_01021">
    <property type="entry name" value="HisI"/>
    <property type="match status" value="1"/>
</dbReference>
<dbReference type="InterPro" id="IPR026660">
    <property type="entry name" value="PRA-CH"/>
</dbReference>
<dbReference type="InterPro" id="IPR002496">
    <property type="entry name" value="PRib_AMP_CycHydrolase_dom"/>
</dbReference>
<dbReference type="InterPro" id="IPR038019">
    <property type="entry name" value="PRib_AMP_CycHydrolase_sf"/>
</dbReference>
<dbReference type="NCBIfam" id="NF000768">
    <property type="entry name" value="PRK00051.1"/>
    <property type="match status" value="1"/>
</dbReference>
<dbReference type="PANTHER" id="PTHR42945">
    <property type="entry name" value="HISTIDINE BIOSYNTHESIS BIFUNCTIONAL PROTEIN"/>
    <property type="match status" value="1"/>
</dbReference>
<dbReference type="PANTHER" id="PTHR42945:SF1">
    <property type="entry name" value="HISTIDINE BIOSYNTHESIS BIFUNCTIONAL PROTEIN HIS7"/>
    <property type="match status" value="1"/>
</dbReference>
<dbReference type="Pfam" id="PF01502">
    <property type="entry name" value="PRA-CH"/>
    <property type="match status" value="1"/>
</dbReference>
<dbReference type="SUPFAM" id="SSF141734">
    <property type="entry name" value="HisI-like"/>
    <property type="match status" value="1"/>
</dbReference>